<protein>
    <recommendedName>
        <fullName evidence="1">3-phosphoshikimate 1-carboxyvinyltransferase</fullName>
        <ecNumber evidence="1">2.5.1.19</ecNumber>
    </recommendedName>
    <alternativeName>
        <fullName evidence="1">5-enolpyruvylshikimate-3-phosphate synthase</fullName>
        <shortName evidence="1">EPSP synthase</shortName>
        <shortName evidence="1">EPSPS</shortName>
    </alternativeName>
</protein>
<evidence type="ECO:0000255" key="1">
    <source>
        <dbReference type="HAMAP-Rule" id="MF_00210"/>
    </source>
</evidence>
<gene>
    <name evidence="1" type="primary">aroA</name>
    <name type="ordered locus">Dhaf_3392</name>
</gene>
<organism>
    <name type="scientific">Desulfitobacterium hafniense (strain DSM 10664 / DCB-2)</name>
    <dbReference type="NCBI Taxonomy" id="272564"/>
    <lineage>
        <taxon>Bacteria</taxon>
        <taxon>Bacillati</taxon>
        <taxon>Bacillota</taxon>
        <taxon>Clostridia</taxon>
        <taxon>Eubacteriales</taxon>
        <taxon>Desulfitobacteriaceae</taxon>
        <taxon>Desulfitobacterium</taxon>
    </lineage>
</organism>
<comment type="function">
    <text evidence="1">Catalyzes the transfer of the enolpyruvyl moiety of phosphoenolpyruvate (PEP) to the 5-hydroxyl of shikimate-3-phosphate (S3P) to produce enolpyruvyl shikimate-3-phosphate and inorganic phosphate.</text>
</comment>
<comment type="catalytic activity">
    <reaction evidence="1">
        <text>3-phosphoshikimate + phosphoenolpyruvate = 5-O-(1-carboxyvinyl)-3-phosphoshikimate + phosphate</text>
        <dbReference type="Rhea" id="RHEA:21256"/>
        <dbReference type="ChEBI" id="CHEBI:43474"/>
        <dbReference type="ChEBI" id="CHEBI:57701"/>
        <dbReference type="ChEBI" id="CHEBI:58702"/>
        <dbReference type="ChEBI" id="CHEBI:145989"/>
        <dbReference type="EC" id="2.5.1.19"/>
    </reaction>
    <physiologicalReaction direction="left-to-right" evidence="1">
        <dbReference type="Rhea" id="RHEA:21257"/>
    </physiologicalReaction>
</comment>
<comment type="pathway">
    <text evidence="1">Metabolic intermediate biosynthesis; chorismate biosynthesis; chorismate from D-erythrose 4-phosphate and phosphoenolpyruvate: step 6/7.</text>
</comment>
<comment type="subunit">
    <text evidence="1">Monomer.</text>
</comment>
<comment type="subcellular location">
    <subcellularLocation>
        <location evidence="1">Cytoplasm</location>
    </subcellularLocation>
</comment>
<comment type="similarity">
    <text evidence="1">Belongs to the EPSP synthase family.</text>
</comment>
<accession>B8G2R0</accession>
<keyword id="KW-0028">Amino-acid biosynthesis</keyword>
<keyword id="KW-0057">Aromatic amino acid biosynthesis</keyword>
<keyword id="KW-0963">Cytoplasm</keyword>
<keyword id="KW-0808">Transferase</keyword>
<sequence length="435" mass="46738">MQINNESKGIRINPMGRIQGEIEVPGDKSISHRAALFGGMAQGETHITNFLLGQDCLSTLACLKTLGVEWERRDAEVWIRGRGFENWHEPQDILDVGNSGTTMRLMLGVLAGCPFSATLTGDSSIRSRPMARVTLPLQEMGARILGRQEGKYAPLTIQGGLLQGIQFRSPVASAQVKSAILLAGLRAKGETMVTEPCLSRDHTERMLRGFGVDLKSEGRTAKVRGGAALSGQEVAVPGDISSAAFFLVLGTLIPQGELLIKNVGMNPTRTGILDALWQMGADIQVEEEREECGEPRANLRVRPAQLHGIEIQGEMIPKLIDEVPVLAVAASLAQGETVIRDAAELRVKETDRIQTVVQGLQALGANAQELPDGLRIQGAKSLRGGAAHSHGDHRLAMAWVVAGLLAEEGISLQGIEAAEVSFPNFLELIHEIAES</sequence>
<feature type="chain" id="PRO_1000124684" description="3-phosphoshikimate 1-carboxyvinyltransferase">
    <location>
        <begin position="1"/>
        <end position="435"/>
    </location>
</feature>
<feature type="active site" description="Proton acceptor" evidence="1">
    <location>
        <position position="321"/>
    </location>
</feature>
<feature type="binding site" evidence="1">
    <location>
        <position position="28"/>
    </location>
    <ligand>
        <name>3-phosphoshikimate</name>
        <dbReference type="ChEBI" id="CHEBI:145989"/>
    </ligand>
</feature>
<feature type="binding site" evidence="1">
    <location>
        <position position="28"/>
    </location>
    <ligand>
        <name>phosphoenolpyruvate</name>
        <dbReference type="ChEBI" id="CHEBI:58702"/>
    </ligand>
</feature>
<feature type="binding site" evidence="1">
    <location>
        <position position="29"/>
    </location>
    <ligand>
        <name>3-phosphoshikimate</name>
        <dbReference type="ChEBI" id="CHEBI:145989"/>
    </ligand>
</feature>
<feature type="binding site" evidence="1">
    <location>
        <position position="33"/>
    </location>
    <ligand>
        <name>3-phosphoshikimate</name>
        <dbReference type="ChEBI" id="CHEBI:145989"/>
    </ligand>
</feature>
<feature type="binding site" evidence="1">
    <location>
        <position position="100"/>
    </location>
    <ligand>
        <name>phosphoenolpyruvate</name>
        <dbReference type="ChEBI" id="CHEBI:58702"/>
    </ligand>
</feature>
<feature type="binding site" evidence="1">
    <location>
        <position position="128"/>
    </location>
    <ligand>
        <name>phosphoenolpyruvate</name>
        <dbReference type="ChEBI" id="CHEBI:58702"/>
    </ligand>
</feature>
<feature type="binding site" evidence="1">
    <location>
        <position position="173"/>
    </location>
    <ligand>
        <name>3-phosphoshikimate</name>
        <dbReference type="ChEBI" id="CHEBI:145989"/>
    </ligand>
</feature>
<feature type="binding site" evidence="1">
    <location>
        <position position="175"/>
    </location>
    <ligand>
        <name>3-phosphoshikimate</name>
        <dbReference type="ChEBI" id="CHEBI:145989"/>
    </ligand>
</feature>
<feature type="binding site" evidence="1">
    <location>
        <position position="175"/>
    </location>
    <ligand>
        <name>phosphoenolpyruvate</name>
        <dbReference type="ChEBI" id="CHEBI:58702"/>
    </ligand>
</feature>
<feature type="binding site" evidence="1">
    <location>
        <position position="321"/>
    </location>
    <ligand>
        <name>3-phosphoshikimate</name>
        <dbReference type="ChEBI" id="CHEBI:145989"/>
    </ligand>
</feature>
<feature type="binding site" evidence="1">
    <location>
        <position position="348"/>
    </location>
    <ligand>
        <name>3-phosphoshikimate</name>
        <dbReference type="ChEBI" id="CHEBI:145989"/>
    </ligand>
</feature>
<feature type="binding site" evidence="1">
    <location>
        <position position="352"/>
    </location>
    <ligand>
        <name>phosphoenolpyruvate</name>
        <dbReference type="ChEBI" id="CHEBI:58702"/>
    </ligand>
</feature>
<feature type="binding site" evidence="1">
    <location>
        <position position="394"/>
    </location>
    <ligand>
        <name>phosphoenolpyruvate</name>
        <dbReference type="ChEBI" id="CHEBI:58702"/>
    </ligand>
</feature>
<dbReference type="EC" id="2.5.1.19" evidence="1"/>
<dbReference type="EMBL" id="CP001336">
    <property type="protein sequence ID" value="ACL21410.1"/>
    <property type="molecule type" value="Genomic_DNA"/>
</dbReference>
<dbReference type="RefSeq" id="WP_011460209.1">
    <property type="nucleotide sequence ID" value="NC_011830.1"/>
</dbReference>
<dbReference type="SMR" id="B8G2R0"/>
<dbReference type="KEGG" id="dhd:Dhaf_3392"/>
<dbReference type="HOGENOM" id="CLU_024321_0_1_9"/>
<dbReference type="UniPathway" id="UPA00053">
    <property type="reaction ID" value="UER00089"/>
</dbReference>
<dbReference type="Proteomes" id="UP000007726">
    <property type="component" value="Chromosome"/>
</dbReference>
<dbReference type="GO" id="GO:0005737">
    <property type="term" value="C:cytoplasm"/>
    <property type="evidence" value="ECO:0007669"/>
    <property type="project" value="UniProtKB-SubCell"/>
</dbReference>
<dbReference type="GO" id="GO:0003866">
    <property type="term" value="F:3-phosphoshikimate 1-carboxyvinyltransferase activity"/>
    <property type="evidence" value="ECO:0007669"/>
    <property type="project" value="UniProtKB-UniRule"/>
</dbReference>
<dbReference type="GO" id="GO:0008652">
    <property type="term" value="P:amino acid biosynthetic process"/>
    <property type="evidence" value="ECO:0007669"/>
    <property type="project" value="UniProtKB-KW"/>
</dbReference>
<dbReference type="GO" id="GO:0009073">
    <property type="term" value="P:aromatic amino acid family biosynthetic process"/>
    <property type="evidence" value="ECO:0007669"/>
    <property type="project" value="UniProtKB-KW"/>
</dbReference>
<dbReference type="GO" id="GO:0009423">
    <property type="term" value="P:chorismate biosynthetic process"/>
    <property type="evidence" value="ECO:0007669"/>
    <property type="project" value="UniProtKB-UniRule"/>
</dbReference>
<dbReference type="CDD" id="cd01556">
    <property type="entry name" value="EPSP_synthase"/>
    <property type="match status" value="1"/>
</dbReference>
<dbReference type="FunFam" id="3.65.10.10:FF:000005">
    <property type="entry name" value="3-phosphoshikimate 1-carboxyvinyltransferase"/>
    <property type="match status" value="1"/>
</dbReference>
<dbReference type="FunFam" id="3.65.10.10:FF:000006">
    <property type="entry name" value="3-phosphoshikimate 1-carboxyvinyltransferase"/>
    <property type="match status" value="1"/>
</dbReference>
<dbReference type="Gene3D" id="3.65.10.10">
    <property type="entry name" value="Enolpyruvate transferase domain"/>
    <property type="match status" value="2"/>
</dbReference>
<dbReference type="HAMAP" id="MF_00210">
    <property type="entry name" value="EPSP_synth"/>
    <property type="match status" value="1"/>
</dbReference>
<dbReference type="InterPro" id="IPR001986">
    <property type="entry name" value="Enolpyruvate_Tfrase_dom"/>
</dbReference>
<dbReference type="InterPro" id="IPR036968">
    <property type="entry name" value="Enolpyruvate_Tfrase_sf"/>
</dbReference>
<dbReference type="InterPro" id="IPR006264">
    <property type="entry name" value="EPSP_synthase"/>
</dbReference>
<dbReference type="InterPro" id="IPR023193">
    <property type="entry name" value="EPSP_synthase_CS"/>
</dbReference>
<dbReference type="InterPro" id="IPR013792">
    <property type="entry name" value="RNA3'P_cycl/enolpyr_Trfase_a/b"/>
</dbReference>
<dbReference type="NCBIfam" id="TIGR01356">
    <property type="entry name" value="aroA"/>
    <property type="match status" value="1"/>
</dbReference>
<dbReference type="PANTHER" id="PTHR21090">
    <property type="entry name" value="AROM/DEHYDROQUINATE SYNTHASE"/>
    <property type="match status" value="1"/>
</dbReference>
<dbReference type="PANTHER" id="PTHR21090:SF5">
    <property type="entry name" value="PENTAFUNCTIONAL AROM POLYPEPTIDE"/>
    <property type="match status" value="1"/>
</dbReference>
<dbReference type="Pfam" id="PF00275">
    <property type="entry name" value="EPSP_synthase"/>
    <property type="match status" value="1"/>
</dbReference>
<dbReference type="PIRSF" id="PIRSF000505">
    <property type="entry name" value="EPSPS"/>
    <property type="match status" value="1"/>
</dbReference>
<dbReference type="SUPFAM" id="SSF55205">
    <property type="entry name" value="EPT/RTPC-like"/>
    <property type="match status" value="1"/>
</dbReference>
<dbReference type="PROSITE" id="PS00104">
    <property type="entry name" value="EPSP_SYNTHASE_1"/>
    <property type="match status" value="1"/>
</dbReference>
<dbReference type="PROSITE" id="PS00885">
    <property type="entry name" value="EPSP_SYNTHASE_2"/>
    <property type="match status" value="1"/>
</dbReference>
<reference key="1">
    <citation type="journal article" date="2012" name="BMC Microbiol.">
        <title>Genome sequence of Desulfitobacterium hafniense DCB-2, a Gram-positive anaerobe capable of dehalogenation and metal reduction.</title>
        <authorList>
            <person name="Kim S.H."/>
            <person name="Harzman C."/>
            <person name="Davis J.K."/>
            <person name="Hutcheson R."/>
            <person name="Broderick J.B."/>
            <person name="Marsh T.L."/>
            <person name="Tiedje J.M."/>
        </authorList>
    </citation>
    <scope>NUCLEOTIDE SEQUENCE [LARGE SCALE GENOMIC DNA]</scope>
    <source>
        <strain>DSM 10664 / DCB-2</strain>
    </source>
</reference>
<proteinExistence type="inferred from homology"/>
<name>AROA_DESHD</name>